<proteinExistence type="inferred from homology"/>
<dbReference type="EMBL" id="CP000781">
    <property type="protein sequence ID" value="ABS66924.1"/>
    <property type="molecule type" value="Genomic_DNA"/>
</dbReference>
<dbReference type="SMR" id="A7IFY1"/>
<dbReference type="STRING" id="78245.Xaut_1679"/>
<dbReference type="KEGG" id="xau:Xaut_1679"/>
<dbReference type="eggNOG" id="COG0087">
    <property type="taxonomic scope" value="Bacteria"/>
</dbReference>
<dbReference type="HOGENOM" id="CLU_044142_2_0_5"/>
<dbReference type="OrthoDB" id="9806135at2"/>
<dbReference type="PhylomeDB" id="A7IFY1"/>
<dbReference type="Proteomes" id="UP000002417">
    <property type="component" value="Chromosome"/>
</dbReference>
<dbReference type="GO" id="GO:0022625">
    <property type="term" value="C:cytosolic large ribosomal subunit"/>
    <property type="evidence" value="ECO:0007669"/>
    <property type="project" value="TreeGrafter"/>
</dbReference>
<dbReference type="GO" id="GO:0019843">
    <property type="term" value="F:rRNA binding"/>
    <property type="evidence" value="ECO:0007669"/>
    <property type="project" value="UniProtKB-UniRule"/>
</dbReference>
<dbReference type="GO" id="GO:0003735">
    <property type="term" value="F:structural constituent of ribosome"/>
    <property type="evidence" value="ECO:0007669"/>
    <property type="project" value="InterPro"/>
</dbReference>
<dbReference type="GO" id="GO:0006412">
    <property type="term" value="P:translation"/>
    <property type="evidence" value="ECO:0007669"/>
    <property type="project" value="UniProtKB-UniRule"/>
</dbReference>
<dbReference type="FunFam" id="2.40.30.10:FF:000004">
    <property type="entry name" value="50S ribosomal protein L3"/>
    <property type="match status" value="1"/>
</dbReference>
<dbReference type="FunFam" id="3.30.160.810:FF:000001">
    <property type="entry name" value="50S ribosomal protein L3"/>
    <property type="match status" value="1"/>
</dbReference>
<dbReference type="Gene3D" id="3.30.160.810">
    <property type="match status" value="1"/>
</dbReference>
<dbReference type="Gene3D" id="2.40.30.10">
    <property type="entry name" value="Translation factors"/>
    <property type="match status" value="1"/>
</dbReference>
<dbReference type="HAMAP" id="MF_01325_B">
    <property type="entry name" value="Ribosomal_uL3_B"/>
    <property type="match status" value="1"/>
</dbReference>
<dbReference type="InterPro" id="IPR000597">
    <property type="entry name" value="Ribosomal_uL3"/>
</dbReference>
<dbReference type="InterPro" id="IPR019927">
    <property type="entry name" value="Ribosomal_uL3_bac/org-type"/>
</dbReference>
<dbReference type="InterPro" id="IPR019926">
    <property type="entry name" value="Ribosomal_uL3_CS"/>
</dbReference>
<dbReference type="InterPro" id="IPR009000">
    <property type="entry name" value="Transl_B-barrel_sf"/>
</dbReference>
<dbReference type="NCBIfam" id="TIGR03625">
    <property type="entry name" value="L3_bact"/>
    <property type="match status" value="1"/>
</dbReference>
<dbReference type="PANTHER" id="PTHR11229">
    <property type="entry name" value="50S RIBOSOMAL PROTEIN L3"/>
    <property type="match status" value="1"/>
</dbReference>
<dbReference type="PANTHER" id="PTHR11229:SF16">
    <property type="entry name" value="LARGE RIBOSOMAL SUBUNIT PROTEIN UL3C"/>
    <property type="match status" value="1"/>
</dbReference>
<dbReference type="Pfam" id="PF00297">
    <property type="entry name" value="Ribosomal_L3"/>
    <property type="match status" value="1"/>
</dbReference>
<dbReference type="SUPFAM" id="SSF50447">
    <property type="entry name" value="Translation proteins"/>
    <property type="match status" value="1"/>
</dbReference>
<dbReference type="PROSITE" id="PS00474">
    <property type="entry name" value="RIBOSOMAL_L3"/>
    <property type="match status" value="1"/>
</dbReference>
<name>RL3_XANP2</name>
<reference key="1">
    <citation type="submission" date="2007-07" db="EMBL/GenBank/DDBJ databases">
        <title>Complete sequence of chromosome of Xanthobacter autotrophicus Py2.</title>
        <authorList>
            <consortium name="US DOE Joint Genome Institute"/>
            <person name="Copeland A."/>
            <person name="Lucas S."/>
            <person name="Lapidus A."/>
            <person name="Barry K."/>
            <person name="Glavina del Rio T."/>
            <person name="Hammon N."/>
            <person name="Israni S."/>
            <person name="Dalin E."/>
            <person name="Tice H."/>
            <person name="Pitluck S."/>
            <person name="Sims D."/>
            <person name="Brettin T."/>
            <person name="Bruce D."/>
            <person name="Detter J.C."/>
            <person name="Han C."/>
            <person name="Tapia R."/>
            <person name="Brainard J."/>
            <person name="Schmutz J."/>
            <person name="Larimer F."/>
            <person name="Land M."/>
            <person name="Hauser L."/>
            <person name="Kyrpides N."/>
            <person name="Kim E."/>
            <person name="Ensigns S.A."/>
            <person name="Richardson P."/>
        </authorList>
    </citation>
    <scope>NUCLEOTIDE SEQUENCE [LARGE SCALE GENOMIC DNA]</scope>
    <source>
        <strain>ATCC BAA-1158 / Py2</strain>
    </source>
</reference>
<accession>A7IFY1</accession>
<keyword id="KW-0488">Methylation</keyword>
<keyword id="KW-1185">Reference proteome</keyword>
<keyword id="KW-0687">Ribonucleoprotein</keyword>
<keyword id="KW-0689">Ribosomal protein</keyword>
<keyword id="KW-0694">RNA-binding</keyword>
<keyword id="KW-0699">rRNA-binding</keyword>
<protein>
    <recommendedName>
        <fullName evidence="1">Large ribosomal subunit protein uL3</fullName>
    </recommendedName>
    <alternativeName>
        <fullName evidence="3">50S ribosomal protein L3</fullName>
    </alternativeName>
</protein>
<feature type="chain" id="PRO_1000141943" description="Large ribosomal subunit protein uL3">
    <location>
        <begin position="1"/>
        <end position="241"/>
    </location>
</feature>
<feature type="region of interest" description="Disordered" evidence="2">
    <location>
        <begin position="140"/>
        <end position="168"/>
    </location>
</feature>
<feature type="region of interest" description="Disordered" evidence="2">
    <location>
        <begin position="216"/>
        <end position="241"/>
    </location>
</feature>
<feature type="modified residue" description="N5-methylglutamine" evidence="1">
    <location>
        <position position="151"/>
    </location>
</feature>
<organism>
    <name type="scientific">Xanthobacter autotrophicus (strain ATCC BAA-1158 / Py2)</name>
    <dbReference type="NCBI Taxonomy" id="78245"/>
    <lineage>
        <taxon>Bacteria</taxon>
        <taxon>Pseudomonadati</taxon>
        <taxon>Pseudomonadota</taxon>
        <taxon>Alphaproteobacteria</taxon>
        <taxon>Hyphomicrobiales</taxon>
        <taxon>Xanthobacteraceae</taxon>
        <taxon>Xanthobacter</taxon>
    </lineage>
</organism>
<sequence>MRSGVIAQKVGMTRIFTDAGEHVPVTVLKVESCQVVAHRTLDKNGYVAVQLGAGRRKPKNVTRAERGHFAVAQVEPKHKLAEFRVPEEALIPVGAEITADHFVVGQYVDVTGTTIGKGFAGGMKRHNFGGLRATHGVSISHRSIGSTGGRQDPGKTFKNKKMPGHMGDVTVTTQNLKVVMTDVERGLIAVEGAVPGHAGGWITVRDAVKKKLPAEAPKPGAFKLNGSEAAPAAEAVNEEGA</sequence>
<gene>
    <name evidence="1" type="primary">rplC</name>
    <name type="ordered locus">Xaut_1679</name>
</gene>
<comment type="function">
    <text evidence="1">One of the primary rRNA binding proteins, it binds directly near the 3'-end of the 23S rRNA, where it nucleates assembly of the 50S subunit.</text>
</comment>
<comment type="subunit">
    <text evidence="1">Part of the 50S ribosomal subunit. Forms a cluster with proteins L14 and L19.</text>
</comment>
<comment type="PTM">
    <text evidence="1">Methylated by PrmB.</text>
</comment>
<comment type="similarity">
    <text evidence="1">Belongs to the universal ribosomal protein uL3 family.</text>
</comment>
<evidence type="ECO:0000255" key="1">
    <source>
        <dbReference type="HAMAP-Rule" id="MF_01325"/>
    </source>
</evidence>
<evidence type="ECO:0000256" key="2">
    <source>
        <dbReference type="SAM" id="MobiDB-lite"/>
    </source>
</evidence>
<evidence type="ECO:0000305" key="3"/>